<accession>P56894</accession>
<comment type="function">
    <text evidence="1">Necessary for efficient RNA polymerase transcription elongation past template-encoded arresting sites. The arresting sites in DNA have the property of trapping a certain fraction of elongating RNA polymerases that pass through, resulting in locked ternary complexes. Cleavage of the nascent transcript by cleavage factors such as GreA or GreB allows the resumption of elongation from the new 3'terminus. GreA releases sequences of 2 to 3 nucleotides.</text>
</comment>
<comment type="similarity">
    <text evidence="1">Belongs to the GreA/GreB family.</text>
</comment>
<keyword id="KW-0238">DNA-binding</keyword>
<keyword id="KW-1185">Reference proteome</keyword>
<keyword id="KW-0804">Transcription</keyword>
<keyword id="KW-0805">Transcription regulation</keyword>
<gene>
    <name evidence="1" type="primary">greA</name>
    <name type="ordered locus">R01573</name>
    <name type="ORF">SMc01218</name>
</gene>
<evidence type="ECO:0000255" key="1">
    <source>
        <dbReference type="HAMAP-Rule" id="MF_00105"/>
    </source>
</evidence>
<proteinExistence type="inferred from homology"/>
<feature type="chain" id="PRO_0000176961" description="Transcription elongation factor GreA">
    <location>
        <begin position="1"/>
        <end position="158"/>
    </location>
</feature>
<protein>
    <recommendedName>
        <fullName evidence="1">Transcription elongation factor GreA</fullName>
    </recommendedName>
    <alternativeName>
        <fullName evidence="1">Transcript cleavage factor GreA</fullName>
    </alternativeName>
</protein>
<sequence length="158" mass="17473">MVDKVPMTQGGFVNLQEELRWRQQEERPRIIEAIAEARAHGDLSENAEYHAAKEAQSHNEGRISELEDLIARAEVIDLSKMSGSKIKFGARVKLVDEDTEEEKTYQIVGDQEADVKQGRISISSPIARALIGKEVGDSIEVNAPGGSKAYEILAVQWG</sequence>
<reference key="1">
    <citation type="journal article" date="2001" name="J. Bacteriol.">
        <title>Genetic characterization of a Sinorhizobium meliloti chromosomal region involved in lipopolysaccharide biosynthesis.</title>
        <authorList>
            <person name="Lagares A."/>
            <person name="Hozbor D.F."/>
            <person name="Niehaus K."/>
            <person name="Pich Otero A.J.L."/>
            <person name="Lorenzen J."/>
            <person name="Arnold W."/>
            <person name="Puehler A."/>
        </authorList>
    </citation>
    <scope>NUCLEOTIDE SEQUENCE [GENOMIC DNA]</scope>
    <source>
        <strain>RCR2011 / SU47</strain>
    </source>
</reference>
<reference key="2">
    <citation type="journal article" date="2001" name="Proc. Natl. Acad. Sci. U.S.A.">
        <title>Analysis of the chromosome sequence of the legume symbiont Sinorhizobium meliloti strain 1021.</title>
        <authorList>
            <person name="Capela D."/>
            <person name="Barloy-Hubler F."/>
            <person name="Gouzy J."/>
            <person name="Bothe G."/>
            <person name="Ampe F."/>
            <person name="Batut J."/>
            <person name="Boistard P."/>
            <person name="Becker A."/>
            <person name="Boutry M."/>
            <person name="Cadieu E."/>
            <person name="Dreano S."/>
            <person name="Gloux S."/>
            <person name="Godrie T."/>
            <person name="Goffeau A."/>
            <person name="Kahn D."/>
            <person name="Kiss E."/>
            <person name="Lelaure V."/>
            <person name="Masuy D."/>
            <person name="Pohl T."/>
            <person name="Portetelle D."/>
            <person name="Puehler A."/>
            <person name="Purnelle B."/>
            <person name="Ramsperger U."/>
            <person name="Renard C."/>
            <person name="Thebault P."/>
            <person name="Vandenbol M."/>
            <person name="Weidner S."/>
            <person name="Galibert F."/>
        </authorList>
    </citation>
    <scope>NUCLEOTIDE SEQUENCE [LARGE SCALE GENOMIC DNA]</scope>
    <source>
        <strain>1021</strain>
    </source>
</reference>
<reference key="3">
    <citation type="journal article" date="2001" name="Science">
        <title>The composite genome of the legume symbiont Sinorhizobium meliloti.</title>
        <authorList>
            <person name="Galibert F."/>
            <person name="Finan T.M."/>
            <person name="Long S.R."/>
            <person name="Puehler A."/>
            <person name="Abola P."/>
            <person name="Ampe F."/>
            <person name="Barloy-Hubler F."/>
            <person name="Barnett M.J."/>
            <person name="Becker A."/>
            <person name="Boistard P."/>
            <person name="Bothe G."/>
            <person name="Boutry M."/>
            <person name="Bowser L."/>
            <person name="Buhrmester J."/>
            <person name="Cadieu E."/>
            <person name="Capela D."/>
            <person name="Chain P."/>
            <person name="Cowie A."/>
            <person name="Davis R.W."/>
            <person name="Dreano S."/>
            <person name="Federspiel N.A."/>
            <person name="Fisher R.F."/>
            <person name="Gloux S."/>
            <person name="Godrie T."/>
            <person name="Goffeau A."/>
            <person name="Golding B."/>
            <person name="Gouzy J."/>
            <person name="Gurjal M."/>
            <person name="Hernandez-Lucas I."/>
            <person name="Hong A."/>
            <person name="Huizar L."/>
            <person name="Hyman R.W."/>
            <person name="Jones T."/>
            <person name="Kahn D."/>
            <person name="Kahn M.L."/>
            <person name="Kalman S."/>
            <person name="Keating D.H."/>
            <person name="Kiss E."/>
            <person name="Komp C."/>
            <person name="Lelaure V."/>
            <person name="Masuy D."/>
            <person name="Palm C."/>
            <person name="Peck M.C."/>
            <person name="Pohl T.M."/>
            <person name="Portetelle D."/>
            <person name="Purnelle B."/>
            <person name="Ramsperger U."/>
            <person name="Surzycki R."/>
            <person name="Thebault P."/>
            <person name="Vandenbol M."/>
            <person name="Vorhoelter F.J."/>
            <person name="Weidner S."/>
            <person name="Wells D.H."/>
            <person name="Wong K."/>
            <person name="Yeh K.-C."/>
            <person name="Batut J."/>
        </authorList>
    </citation>
    <scope>NUCLEOTIDE SEQUENCE [LARGE SCALE GENOMIC DNA]</scope>
    <source>
        <strain>1021</strain>
    </source>
</reference>
<dbReference type="EMBL" id="AF193023">
    <property type="protein sequence ID" value="AAF06007.1"/>
    <property type="molecule type" value="Genomic_DNA"/>
</dbReference>
<dbReference type="EMBL" id="AL591688">
    <property type="protein sequence ID" value="CAC46152.1"/>
    <property type="molecule type" value="Genomic_DNA"/>
</dbReference>
<dbReference type="RefSeq" id="NP_385679.1">
    <property type="nucleotide sequence ID" value="NC_003047.1"/>
</dbReference>
<dbReference type="RefSeq" id="WP_003529568.1">
    <property type="nucleotide sequence ID" value="NC_003047.1"/>
</dbReference>
<dbReference type="SMR" id="P56894"/>
<dbReference type="EnsemblBacteria" id="CAC46152">
    <property type="protein sequence ID" value="CAC46152"/>
    <property type="gene ID" value="SMc01218"/>
</dbReference>
<dbReference type="GeneID" id="89575899"/>
<dbReference type="KEGG" id="sme:SMc01218"/>
<dbReference type="PATRIC" id="fig|266834.11.peg.3000"/>
<dbReference type="eggNOG" id="COG0782">
    <property type="taxonomic scope" value="Bacteria"/>
</dbReference>
<dbReference type="HOGENOM" id="CLU_101379_2_0_5"/>
<dbReference type="OrthoDB" id="9808774at2"/>
<dbReference type="Proteomes" id="UP000001976">
    <property type="component" value="Chromosome"/>
</dbReference>
<dbReference type="GO" id="GO:0003677">
    <property type="term" value="F:DNA binding"/>
    <property type="evidence" value="ECO:0007669"/>
    <property type="project" value="UniProtKB-UniRule"/>
</dbReference>
<dbReference type="GO" id="GO:0070063">
    <property type="term" value="F:RNA polymerase binding"/>
    <property type="evidence" value="ECO:0007669"/>
    <property type="project" value="InterPro"/>
</dbReference>
<dbReference type="GO" id="GO:0006354">
    <property type="term" value="P:DNA-templated transcription elongation"/>
    <property type="evidence" value="ECO:0007669"/>
    <property type="project" value="TreeGrafter"/>
</dbReference>
<dbReference type="GO" id="GO:0032784">
    <property type="term" value="P:regulation of DNA-templated transcription elongation"/>
    <property type="evidence" value="ECO:0007669"/>
    <property type="project" value="UniProtKB-UniRule"/>
</dbReference>
<dbReference type="FunFam" id="1.10.287.180:FF:000001">
    <property type="entry name" value="Transcription elongation factor GreA"/>
    <property type="match status" value="1"/>
</dbReference>
<dbReference type="FunFam" id="3.10.50.30:FF:000001">
    <property type="entry name" value="Transcription elongation factor GreA"/>
    <property type="match status" value="1"/>
</dbReference>
<dbReference type="Gene3D" id="3.10.50.30">
    <property type="entry name" value="Transcription elongation factor, GreA/GreB, C-terminal domain"/>
    <property type="match status" value="1"/>
</dbReference>
<dbReference type="Gene3D" id="1.10.287.180">
    <property type="entry name" value="Transcription elongation factor, GreA/GreB, N-terminal domain"/>
    <property type="match status" value="1"/>
</dbReference>
<dbReference type="HAMAP" id="MF_00105">
    <property type="entry name" value="GreA_GreB"/>
    <property type="match status" value="1"/>
</dbReference>
<dbReference type="InterPro" id="IPR036953">
    <property type="entry name" value="GreA/GreB_C_sf"/>
</dbReference>
<dbReference type="InterPro" id="IPR018151">
    <property type="entry name" value="TF_GreA/GreB_CS"/>
</dbReference>
<dbReference type="InterPro" id="IPR006359">
    <property type="entry name" value="Tscrpt_elong_fac_GreA"/>
</dbReference>
<dbReference type="InterPro" id="IPR028624">
    <property type="entry name" value="Tscrpt_elong_fac_GreA/B"/>
</dbReference>
<dbReference type="InterPro" id="IPR001437">
    <property type="entry name" value="Tscrpt_elong_fac_GreA/B_C"/>
</dbReference>
<dbReference type="InterPro" id="IPR023459">
    <property type="entry name" value="Tscrpt_elong_fac_GreA/B_fam"/>
</dbReference>
<dbReference type="InterPro" id="IPR022691">
    <property type="entry name" value="Tscrpt_elong_fac_GreA/B_N"/>
</dbReference>
<dbReference type="InterPro" id="IPR036805">
    <property type="entry name" value="Tscrpt_elong_fac_GreA/B_N_sf"/>
</dbReference>
<dbReference type="NCBIfam" id="TIGR01462">
    <property type="entry name" value="greA"/>
    <property type="match status" value="1"/>
</dbReference>
<dbReference type="NCBIfam" id="NF001261">
    <property type="entry name" value="PRK00226.1-2"/>
    <property type="match status" value="1"/>
</dbReference>
<dbReference type="NCBIfam" id="NF001263">
    <property type="entry name" value="PRK00226.1-4"/>
    <property type="match status" value="1"/>
</dbReference>
<dbReference type="NCBIfam" id="NF001264">
    <property type="entry name" value="PRK00226.1-5"/>
    <property type="match status" value="1"/>
</dbReference>
<dbReference type="PANTHER" id="PTHR30437">
    <property type="entry name" value="TRANSCRIPTION ELONGATION FACTOR GREA"/>
    <property type="match status" value="1"/>
</dbReference>
<dbReference type="PANTHER" id="PTHR30437:SF4">
    <property type="entry name" value="TRANSCRIPTION ELONGATION FACTOR GREA"/>
    <property type="match status" value="1"/>
</dbReference>
<dbReference type="Pfam" id="PF01272">
    <property type="entry name" value="GreA_GreB"/>
    <property type="match status" value="1"/>
</dbReference>
<dbReference type="Pfam" id="PF03449">
    <property type="entry name" value="GreA_GreB_N"/>
    <property type="match status" value="1"/>
</dbReference>
<dbReference type="PIRSF" id="PIRSF006092">
    <property type="entry name" value="GreA_GreB"/>
    <property type="match status" value="1"/>
</dbReference>
<dbReference type="SUPFAM" id="SSF54534">
    <property type="entry name" value="FKBP-like"/>
    <property type="match status" value="1"/>
</dbReference>
<dbReference type="SUPFAM" id="SSF46557">
    <property type="entry name" value="GreA transcript cleavage protein, N-terminal domain"/>
    <property type="match status" value="1"/>
</dbReference>
<dbReference type="PROSITE" id="PS00829">
    <property type="entry name" value="GREAB_1"/>
    <property type="match status" value="1"/>
</dbReference>
<dbReference type="PROSITE" id="PS00830">
    <property type="entry name" value="GREAB_2"/>
    <property type="match status" value="1"/>
</dbReference>
<organism>
    <name type="scientific">Rhizobium meliloti (strain 1021)</name>
    <name type="common">Ensifer meliloti</name>
    <name type="synonym">Sinorhizobium meliloti</name>
    <dbReference type="NCBI Taxonomy" id="266834"/>
    <lineage>
        <taxon>Bacteria</taxon>
        <taxon>Pseudomonadati</taxon>
        <taxon>Pseudomonadota</taxon>
        <taxon>Alphaproteobacteria</taxon>
        <taxon>Hyphomicrobiales</taxon>
        <taxon>Rhizobiaceae</taxon>
        <taxon>Sinorhizobium/Ensifer group</taxon>
        <taxon>Sinorhizobium</taxon>
    </lineage>
</organism>
<name>GREA_RHIME</name>